<gene>
    <name evidence="1" type="primary">murA</name>
    <name type="ordered locus">Sputw3181_3446</name>
</gene>
<reference key="1">
    <citation type="submission" date="2006-12" db="EMBL/GenBank/DDBJ databases">
        <title>Complete sequence of Shewanella sp. W3-18-1.</title>
        <authorList>
            <consortium name="US DOE Joint Genome Institute"/>
            <person name="Copeland A."/>
            <person name="Lucas S."/>
            <person name="Lapidus A."/>
            <person name="Barry K."/>
            <person name="Detter J.C."/>
            <person name="Glavina del Rio T."/>
            <person name="Hammon N."/>
            <person name="Israni S."/>
            <person name="Dalin E."/>
            <person name="Tice H."/>
            <person name="Pitluck S."/>
            <person name="Chain P."/>
            <person name="Malfatti S."/>
            <person name="Shin M."/>
            <person name="Vergez L."/>
            <person name="Schmutz J."/>
            <person name="Larimer F."/>
            <person name="Land M."/>
            <person name="Hauser L."/>
            <person name="Kyrpides N."/>
            <person name="Lykidis A."/>
            <person name="Tiedje J."/>
            <person name="Richardson P."/>
        </authorList>
    </citation>
    <scope>NUCLEOTIDE SEQUENCE [LARGE SCALE GENOMIC DNA]</scope>
    <source>
        <strain>W3-18-1</strain>
    </source>
</reference>
<proteinExistence type="inferred from homology"/>
<feature type="chain" id="PRO_1000023107" description="UDP-N-acetylglucosamine 1-carboxyvinyltransferase">
    <location>
        <begin position="1"/>
        <end position="419"/>
    </location>
</feature>
<feature type="active site" description="Proton donor" evidence="1">
    <location>
        <position position="117"/>
    </location>
</feature>
<feature type="binding site" evidence="1">
    <location>
        <begin position="22"/>
        <end position="23"/>
    </location>
    <ligand>
        <name>phosphoenolpyruvate</name>
        <dbReference type="ChEBI" id="CHEBI:58702"/>
    </ligand>
</feature>
<feature type="binding site" evidence="1">
    <location>
        <position position="93"/>
    </location>
    <ligand>
        <name>UDP-N-acetyl-alpha-D-glucosamine</name>
        <dbReference type="ChEBI" id="CHEBI:57705"/>
    </ligand>
</feature>
<feature type="binding site" evidence="1">
    <location>
        <position position="307"/>
    </location>
    <ligand>
        <name>UDP-N-acetyl-alpha-D-glucosamine</name>
        <dbReference type="ChEBI" id="CHEBI:57705"/>
    </ligand>
</feature>
<feature type="binding site" evidence="1">
    <location>
        <position position="329"/>
    </location>
    <ligand>
        <name>UDP-N-acetyl-alpha-D-glucosamine</name>
        <dbReference type="ChEBI" id="CHEBI:57705"/>
    </ligand>
</feature>
<feature type="modified residue" description="2-(S-cysteinyl)pyruvic acid O-phosphothioketal" evidence="1">
    <location>
        <position position="117"/>
    </location>
</feature>
<protein>
    <recommendedName>
        <fullName evidence="1">UDP-N-acetylglucosamine 1-carboxyvinyltransferase</fullName>
        <ecNumber evidence="1">2.5.1.7</ecNumber>
    </recommendedName>
    <alternativeName>
        <fullName evidence="1">Enoylpyruvate transferase</fullName>
    </alternativeName>
    <alternativeName>
        <fullName evidence="1">UDP-N-acetylglucosamine enolpyruvyl transferase</fullName>
        <shortName evidence="1">EPT</shortName>
    </alternativeName>
</protein>
<accession>A1RNL3</accession>
<keyword id="KW-0131">Cell cycle</keyword>
<keyword id="KW-0132">Cell division</keyword>
<keyword id="KW-0133">Cell shape</keyword>
<keyword id="KW-0961">Cell wall biogenesis/degradation</keyword>
<keyword id="KW-0963">Cytoplasm</keyword>
<keyword id="KW-0573">Peptidoglycan synthesis</keyword>
<keyword id="KW-0670">Pyruvate</keyword>
<keyword id="KW-0808">Transferase</keyword>
<evidence type="ECO:0000255" key="1">
    <source>
        <dbReference type="HAMAP-Rule" id="MF_00111"/>
    </source>
</evidence>
<sequence>MDKLTIQASPPLAGDVIISGAKNAALPILMAGVLAETDFVVSNVPNLRDVSTSCKLLRCLGAEVTELGDGQIRISTTNLNEFCAPYDLVKTMRASILILGPLLARYGTADVSLPGGCAIGARPVNLHLHGLEMMGAKIEVKEGYIKARVDGRLKGAHIFMDMVSVGATENLLMAAALADGETVIENAAREPEVIDLANCLIAMGAKITGVGSATLRIQGVERLQGCEYRVMPDRIETGSFLVAAAVTRGRIRCLKADPASLESVIAKLEDAGAKITTGEDWIELDMEGKRPKAVNIKTAPYPGFPTDMQAQFCVLNALAQGTATITETIFENRFMHVPELIRMGATMELEGNTCIIQGIESLSGAQVMATDLRASASLVIAGLVADGKTIVDRIYHLDRGYEHIEQKFQGLGAHVERVQ</sequence>
<organism>
    <name type="scientific">Shewanella sp. (strain W3-18-1)</name>
    <dbReference type="NCBI Taxonomy" id="351745"/>
    <lineage>
        <taxon>Bacteria</taxon>
        <taxon>Pseudomonadati</taxon>
        <taxon>Pseudomonadota</taxon>
        <taxon>Gammaproteobacteria</taxon>
        <taxon>Alteromonadales</taxon>
        <taxon>Shewanellaceae</taxon>
        <taxon>Shewanella</taxon>
    </lineage>
</organism>
<dbReference type="EC" id="2.5.1.7" evidence="1"/>
<dbReference type="EMBL" id="CP000503">
    <property type="protein sequence ID" value="ABM26258.1"/>
    <property type="molecule type" value="Genomic_DNA"/>
</dbReference>
<dbReference type="RefSeq" id="WP_011790698.1">
    <property type="nucleotide sequence ID" value="NC_008750.1"/>
</dbReference>
<dbReference type="SMR" id="A1RNL3"/>
<dbReference type="GeneID" id="67442189"/>
<dbReference type="KEGG" id="shw:Sputw3181_3446"/>
<dbReference type="HOGENOM" id="CLU_027387_0_0_6"/>
<dbReference type="UniPathway" id="UPA00219"/>
<dbReference type="Proteomes" id="UP000002597">
    <property type="component" value="Chromosome"/>
</dbReference>
<dbReference type="GO" id="GO:0005737">
    <property type="term" value="C:cytoplasm"/>
    <property type="evidence" value="ECO:0007669"/>
    <property type="project" value="UniProtKB-SubCell"/>
</dbReference>
<dbReference type="GO" id="GO:0008760">
    <property type="term" value="F:UDP-N-acetylglucosamine 1-carboxyvinyltransferase activity"/>
    <property type="evidence" value="ECO:0007669"/>
    <property type="project" value="UniProtKB-UniRule"/>
</dbReference>
<dbReference type="GO" id="GO:0051301">
    <property type="term" value="P:cell division"/>
    <property type="evidence" value="ECO:0007669"/>
    <property type="project" value="UniProtKB-KW"/>
</dbReference>
<dbReference type="GO" id="GO:0071555">
    <property type="term" value="P:cell wall organization"/>
    <property type="evidence" value="ECO:0007669"/>
    <property type="project" value="UniProtKB-KW"/>
</dbReference>
<dbReference type="GO" id="GO:0009252">
    <property type="term" value="P:peptidoglycan biosynthetic process"/>
    <property type="evidence" value="ECO:0007669"/>
    <property type="project" value="UniProtKB-UniRule"/>
</dbReference>
<dbReference type="GO" id="GO:0008360">
    <property type="term" value="P:regulation of cell shape"/>
    <property type="evidence" value="ECO:0007669"/>
    <property type="project" value="UniProtKB-KW"/>
</dbReference>
<dbReference type="GO" id="GO:0019277">
    <property type="term" value="P:UDP-N-acetylgalactosamine biosynthetic process"/>
    <property type="evidence" value="ECO:0007669"/>
    <property type="project" value="InterPro"/>
</dbReference>
<dbReference type="CDD" id="cd01555">
    <property type="entry name" value="UdpNAET"/>
    <property type="match status" value="1"/>
</dbReference>
<dbReference type="FunFam" id="3.65.10.10:FF:000002">
    <property type="entry name" value="UDP-N-acetylglucosamine 1-carboxyvinyltransferase"/>
    <property type="match status" value="1"/>
</dbReference>
<dbReference type="Gene3D" id="3.65.10.10">
    <property type="entry name" value="Enolpyruvate transferase domain"/>
    <property type="match status" value="2"/>
</dbReference>
<dbReference type="HAMAP" id="MF_00111">
    <property type="entry name" value="MurA"/>
    <property type="match status" value="1"/>
</dbReference>
<dbReference type="InterPro" id="IPR001986">
    <property type="entry name" value="Enolpyruvate_Tfrase_dom"/>
</dbReference>
<dbReference type="InterPro" id="IPR036968">
    <property type="entry name" value="Enolpyruvate_Tfrase_sf"/>
</dbReference>
<dbReference type="InterPro" id="IPR050068">
    <property type="entry name" value="MurA_subfamily"/>
</dbReference>
<dbReference type="InterPro" id="IPR013792">
    <property type="entry name" value="RNA3'P_cycl/enolpyr_Trfase_a/b"/>
</dbReference>
<dbReference type="InterPro" id="IPR005750">
    <property type="entry name" value="UDP_GlcNAc_COvinyl_MurA"/>
</dbReference>
<dbReference type="NCBIfam" id="TIGR01072">
    <property type="entry name" value="murA"/>
    <property type="match status" value="1"/>
</dbReference>
<dbReference type="NCBIfam" id="NF006873">
    <property type="entry name" value="PRK09369.1"/>
    <property type="match status" value="1"/>
</dbReference>
<dbReference type="PANTHER" id="PTHR43783">
    <property type="entry name" value="UDP-N-ACETYLGLUCOSAMINE 1-CARBOXYVINYLTRANSFERASE"/>
    <property type="match status" value="1"/>
</dbReference>
<dbReference type="PANTHER" id="PTHR43783:SF1">
    <property type="entry name" value="UDP-N-ACETYLGLUCOSAMINE 1-CARBOXYVINYLTRANSFERASE"/>
    <property type="match status" value="1"/>
</dbReference>
<dbReference type="Pfam" id="PF00275">
    <property type="entry name" value="EPSP_synthase"/>
    <property type="match status" value="1"/>
</dbReference>
<dbReference type="SUPFAM" id="SSF55205">
    <property type="entry name" value="EPT/RTPC-like"/>
    <property type="match status" value="1"/>
</dbReference>
<name>MURA_SHESW</name>
<comment type="function">
    <text evidence="1">Cell wall formation. Adds enolpyruvyl to UDP-N-acetylglucosamine.</text>
</comment>
<comment type="catalytic activity">
    <reaction evidence="1">
        <text>phosphoenolpyruvate + UDP-N-acetyl-alpha-D-glucosamine = UDP-N-acetyl-3-O-(1-carboxyvinyl)-alpha-D-glucosamine + phosphate</text>
        <dbReference type="Rhea" id="RHEA:18681"/>
        <dbReference type="ChEBI" id="CHEBI:43474"/>
        <dbReference type="ChEBI" id="CHEBI:57705"/>
        <dbReference type="ChEBI" id="CHEBI:58702"/>
        <dbReference type="ChEBI" id="CHEBI:68483"/>
        <dbReference type="EC" id="2.5.1.7"/>
    </reaction>
</comment>
<comment type="pathway">
    <text evidence="1">Cell wall biogenesis; peptidoglycan biosynthesis.</text>
</comment>
<comment type="subcellular location">
    <subcellularLocation>
        <location evidence="1">Cytoplasm</location>
    </subcellularLocation>
</comment>
<comment type="similarity">
    <text evidence="1">Belongs to the EPSP synthase family. MurA subfamily.</text>
</comment>